<name>SY131_ARATH</name>
<comment type="function">
    <text evidence="1">Vesicle trafficking protein that functions in the secretory pathway.</text>
</comment>
<comment type="subunit">
    <text evidence="1">Part of the t-SNARE complex.</text>
</comment>
<comment type="subcellular location">
    <subcellularLocation>
        <location evidence="1">Membrane</location>
        <topology evidence="1">Single-pass type IV membrane protein</topology>
    </subcellularLocation>
</comment>
<comment type="similarity">
    <text evidence="6">Belongs to the syntaxin family.</text>
</comment>
<protein>
    <recommendedName>
        <fullName>Putative syntaxin-131</fullName>
        <shortName>AtSYP131</shortName>
    </recommendedName>
</protein>
<feature type="chain" id="PRO_0000210251" description="Putative syntaxin-131">
    <location>
        <begin position="1"/>
        <end position="306"/>
    </location>
</feature>
<feature type="topological domain" description="Cytoplasmic" evidence="3">
    <location>
        <begin position="1"/>
        <end position="276"/>
    </location>
</feature>
<feature type="transmembrane region" description="Helical; Anchor for type IV membrane protein" evidence="3">
    <location>
        <begin position="277"/>
        <end position="297"/>
    </location>
</feature>
<feature type="topological domain" description="Vesicular" evidence="3">
    <location>
        <begin position="298"/>
        <end position="306"/>
    </location>
</feature>
<feature type="domain" description="t-SNARE coiled-coil homology" evidence="4">
    <location>
        <begin position="205"/>
        <end position="267"/>
    </location>
</feature>
<feature type="region of interest" description="Disordered" evidence="5">
    <location>
        <begin position="11"/>
        <end position="35"/>
    </location>
</feature>
<feature type="coiled-coil region" evidence="3">
    <location>
        <begin position="35"/>
        <end position="72"/>
    </location>
</feature>
<feature type="coiled-coil region" evidence="3">
    <location>
        <begin position="134"/>
        <end position="162"/>
    </location>
</feature>
<feature type="compositionally biased region" description="Basic and acidic residues" evidence="5">
    <location>
        <begin position="11"/>
        <end position="23"/>
    </location>
</feature>
<feature type="modified residue" description="N-acetylmethionine" evidence="2">
    <location>
        <position position="1"/>
    </location>
</feature>
<proteinExistence type="inferred from homology"/>
<dbReference type="EMBL" id="AC009540">
    <property type="protein sequence ID" value="AAF00648.1"/>
    <property type="molecule type" value="Genomic_DNA"/>
</dbReference>
<dbReference type="EMBL" id="CP002686">
    <property type="status" value="NOT_ANNOTATED_CDS"/>
    <property type="molecule type" value="Genomic_DNA"/>
</dbReference>
<dbReference type="SMR" id="Q9SRV7"/>
<dbReference type="BioGRID" id="6474">
    <property type="interactions" value="1"/>
</dbReference>
<dbReference type="FunCoup" id="Q9SRV7">
    <property type="interactions" value="674"/>
</dbReference>
<dbReference type="IntAct" id="Q9SRV7">
    <property type="interactions" value="1"/>
</dbReference>
<dbReference type="STRING" id="3702.Q9SRV7"/>
<dbReference type="PaxDb" id="3702-AT3G03800.1"/>
<dbReference type="ProteomicsDB" id="226774"/>
<dbReference type="Araport" id="AT3G03800"/>
<dbReference type="TAIR" id="AT3G03800">
    <property type="gene designation" value="SYP131"/>
</dbReference>
<dbReference type="eggNOG" id="KOG0810">
    <property type="taxonomic scope" value="Eukaryota"/>
</dbReference>
<dbReference type="HOGENOM" id="CLU_042423_1_1_1"/>
<dbReference type="InParanoid" id="Q9SRV7"/>
<dbReference type="PhylomeDB" id="Q9SRV7"/>
<dbReference type="PRO" id="PR:Q9SRV7"/>
<dbReference type="Proteomes" id="UP000006548">
    <property type="component" value="Chromosome 3"/>
</dbReference>
<dbReference type="ExpressionAtlas" id="Q9SRV7">
    <property type="expression patterns" value="baseline and differential"/>
</dbReference>
<dbReference type="GO" id="GO:0012505">
    <property type="term" value="C:endomembrane system"/>
    <property type="evidence" value="ECO:0000318"/>
    <property type="project" value="GO_Central"/>
</dbReference>
<dbReference type="GO" id="GO:0005886">
    <property type="term" value="C:plasma membrane"/>
    <property type="evidence" value="ECO:0007005"/>
    <property type="project" value="TAIR"/>
</dbReference>
<dbReference type="GO" id="GO:0031201">
    <property type="term" value="C:SNARE complex"/>
    <property type="evidence" value="ECO:0000318"/>
    <property type="project" value="GO_Central"/>
</dbReference>
<dbReference type="GO" id="GO:0005484">
    <property type="term" value="F:SNAP receptor activity"/>
    <property type="evidence" value="ECO:0000318"/>
    <property type="project" value="GO_Central"/>
</dbReference>
<dbReference type="GO" id="GO:0000149">
    <property type="term" value="F:SNARE binding"/>
    <property type="evidence" value="ECO:0000318"/>
    <property type="project" value="GO_Central"/>
</dbReference>
<dbReference type="GO" id="GO:0006887">
    <property type="term" value="P:exocytosis"/>
    <property type="evidence" value="ECO:0000318"/>
    <property type="project" value="GO_Central"/>
</dbReference>
<dbReference type="GO" id="GO:0006886">
    <property type="term" value="P:intracellular protein transport"/>
    <property type="evidence" value="ECO:0000318"/>
    <property type="project" value="GO_Central"/>
</dbReference>
<dbReference type="GO" id="GO:0048278">
    <property type="term" value="P:vesicle docking"/>
    <property type="evidence" value="ECO:0000318"/>
    <property type="project" value="GO_Central"/>
</dbReference>
<dbReference type="GO" id="GO:0006906">
    <property type="term" value="P:vesicle fusion"/>
    <property type="evidence" value="ECO:0000318"/>
    <property type="project" value="GO_Central"/>
</dbReference>
<dbReference type="CDD" id="cd15848">
    <property type="entry name" value="SNARE_syntaxin1-like"/>
    <property type="match status" value="1"/>
</dbReference>
<dbReference type="CDD" id="cd00179">
    <property type="entry name" value="SynN"/>
    <property type="match status" value="1"/>
</dbReference>
<dbReference type="FunFam" id="1.20.5.110:FF:000008">
    <property type="entry name" value="Syntaxin 132"/>
    <property type="match status" value="1"/>
</dbReference>
<dbReference type="FunFam" id="1.20.58.70:FF:000013">
    <property type="entry name" value="Syntaxin 132"/>
    <property type="match status" value="1"/>
</dbReference>
<dbReference type="Gene3D" id="1.20.5.110">
    <property type="match status" value="1"/>
</dbReference>
<dbReference type="Gene3D" id="1.20.58.70">
    <property type="match status" value="1"/>
</dbReference>
<dbReference type="InterPro" id="IPR010989">
    <property type="entry name" value="SNARE"/>
</dbReference>
<dbReference type="InterPro" id="IPR045242">
    <property type="entry name" value="Syntaxin"/>
</dbReference>
<dbReference type="InterPro" id="IPR006012">
    <property type="entry name" value="Syntaxin/epimorphin_CS"/>
</dbReference>
<dbReference type="InterPro" id="IPR006011">
    <property type="entry name" value="Syntaxin_N"/>
</dbReference>
<dbReference type="InterPro" id="IPR000727">
    <property type="entry name" value="T_SNARE_dom"/>
</dbReference>
<dbReference type="PANTHER" id="PTHR19957">
    <property type="entry name" value="SYNTAXIN"/>
    <property type="match status" value="1"/>
</dbReference>
<dbReference type="PANTHER" id="PTHR19957:SF319">
    <property type="entry name" value="SYNTAXIN-131-RELATED"/>
    <property type="match status" value="1"/>
</dbReference>
<dbReference type="Pfam" id="PF05739">
    <property type="entry name" value="SNARE"/>
    <property type="match status" value="1"/>
</dbReference>
<dbReference type="Pfam" id="PF00804">
    <property type="entry name" value="Syntaxin"/>
    <property type="match status" value="1"/>
</dbReference>
<dbReference type="SMART" id="SM00503">
    <property type="entry name" value="SynN"/>
    <property type="match status" value="1"/>
</dbReference>
<dbReference type="SMART" id="SM00397">
    <property type="entry name" value="t_SNARE"/>
    <property type="match status" value="1"/>
</dbReference>
<dbReference type="SUPFAM" id="SSF47661">
    <property type="entry name" value="t-snare proteins"/>
    <property type="match status" value="1"/>
</dbReference>
<dbReference type="PROSITE" id="PS00914">
    <property type="entry name" value="SYNTAXIN"/>
    <property type="match status" value="1"/>
</dbReference>
<dbReference type="PROSITE" id="PS50192">
    <property type="entry name" value="T_SNARE"/>
    <property type="match status" value="1"/>
</dbReference>
<organism>
    <name type="scientific">Arabidopsis thaliana</name>
    <name type="common">Mouse-ear cress</name>
    <dbReference type="NCBI Taxonomy" id="3702"/>
    <lineage>
        <taxon>Eukaryota</taxon>
        <taxon>Viridiplantae</taxon>
        <taxon>Streptophyta</taxon>
        <taxon>Embryophyta</taxon>
        <taxon>Tracheophyta</taxon>
        <taxon>Spermatophyta</taxon>
        <taxon>Magnoliopsida</taxon>
        <taxon>eudicotyledons</taxon>
        <taxon>Gunneridae</taxon>
        <taxon>Pentapetalae</taxon>
        <taxon>rosids</taxon>
        <taxon>malvids</taxon>
        <taxon>Brassicales</taxon>
        <taxon>Brassicaceae</taxon>
        <taxon>Camelineae</taxon>
        <taxon>Arabidopsis</taxon>
    </lineage>
</organism>
<gene>
    <name type="primary">SYP131</name>
    <name type="ordered locus">At3g03800</name>
    <name type="ORF">F20H23.28</name>
</gene>
<reference key="1">
    <citation type="journal article" date="2000" name="Nature">
        <title>Sequence and analysis of chromosome 3 of the plant Arabidopsis thaliana.</title>
        <authorList>
            <person name="Salanoubat M."/>
            <person name="Lemcke K."/>
            <person name="Rieger M."/>
            <person name="Ansorge W."/>
            <person name="Unseld M."/>
            <person name="Fartmann B."/>
            <person name="Valle G."/>
            <person name="Bloecker H."/>
            <person name="Perez-Alonso M."/>
            <person name="Obermaier B."/>
            <person name="Delseny M."/>
            <person name="Boutry M."/>
            <person name="Grivell L.A."/>
            <person name="Mache R."/>
            <person name="Puigdomenech P."/>
            <person name="De Simone V."/>
            <person name="Choisne N."/>
            <person name="Artiguenave F."/>
            <person name="Robert C."/>
            <person name="Brottier P."/>
            <person name="Wincker P."/>
            <person name="Cattolico L."/>
            <person name="Weissenbach J."/>
            <person name="Saurin W."/>
            <person name="Quetier F."/>
            <person name="Schaefer M."/>
            <person name="Mueller-Auer S."/>
            <person name="Gabel C."/>
            <person name="Fuchs M."/>
            <person name="Benes V."/>
            <person name="Wurmbach E."/>
            <person name="Drzonek H."/>
            <person name="Erfle H."/>
            <person name="Jordan N."/>
            <person name="Bangert S."/>
            <person name="Wiedelmann R."/>
            <person name="Kranz H."/>
            <person name="Voss H."/>
            <person name="Holland R."/>
            <person name="Brandt P."/>
            <person name="Nyakatura G."/>
            <person name="Vezzi A."/>
            <person name="D'Angelo M."/>
            <person name="Pallavicini A."/>
            <person name="Toppo S."/>
            <person name="Simionati B."/>
            <person name="Conrad A."/>
            <person name="Hornischer K."/>
            <person name="Kauer G."/>
            <person name="Loehnert T.-H."/>
            <person name="Nordsiek G."/>
            <person name="Reichelt J."/>
            <person name="Scharfe M."/>
            <person name="Schoen O."/>
            <person name="Bargues M."/>
            <person name="Terol J."/>
            <person name="Climent J."/>
            <person name="Navarro P."/>
            <person name="Collado C."/>
            <person name="Perez-Perez A."/>
            <person name="Ottenwaelder B."/>
            <person name="Duchemin D."/>
            <person name="Cooke R."/>
            <person name="Laudie M."/>
            <person name="Berger-Llauro C."/>
            <person name="Purnelle B."/>
            <person name="Masuy D."/>
            <person name="de Haan M."/>
            <person name="Maarse A.C."/>
            <person name="Alcaraz J.-P."/>
            <person name="Cottet A."/>
            <person name="Casacuberta E."/>
            <person name="Monfort A."/>
            <person name="Argiriou A."/>
            <person name="Flores M."/>
            <person name="Liguori R."/>
            <person name="Vitale D."/>
            <person name="Mannhaupt G."/>
            <person name="Haase D."/>
            <person name="Schoof H."/>
            <person name="Rudd S."/>
            <person name="Zaccaria P."/>
            <person name="Mewes H.-W."/>
            <person name="Mayer K.F.X."/>
            <person name="Kaul S."/>
            <person name="Town C.D."/>
            <person name="Koo H.L."/>
            <person name="Tallon L.J."/>
            <person name="Jenkins J."/>
            <person name="Rooney T."/>
            <person name="Rizzo M."/>
            <person name="Walts A."/>
            <person name="Utterback T."/>
            <person name="Fujii C.Y."/>
            <person name="Shea T.P."/>
            <person name="Creasy T.H."/>
            <person name="Haas B."/>
            <person name="Maiti R."/>
            <person name="Wu D."/>
            <person name="Peterson J."/>
            <person name="Van Aken S."/>
            <person name="Pai G."/>
            <person name="Militscher J."/>
            <person name="Sellers P."/>
            <person name="Gill J.E."/>
            <person name="Feldblyum T.V."/>
            <person name="Preuss D."/>
            <person name="Lin X."/>
            <person name="Nierman W.C."/>
            <person name="Salzberg S.L."/>
            <person name="White O."/>
            <person name="Venter J.C."/>
            <person name="Fraser C.M."/>
            <person name="Kaneko T."/>
            <person name="Nakamura Y."/>
            <person name="Sato S."/>
            <person name="Kato T."/>
            <person name="Asamizu E."/>
            <person name="Sasamoto S."/>
            <person name="Kimura T."/>
            <person name="Idesawa K."/>
            <person name="Kawashima K."/>
            <person name="Kishida Y."/>
            <person name="Kiyokawa C."/>
            <person name="Kohara M."/>
            <person name="Matsumoto M."/>
            <person name="Matsuno A."/>
            <person name="Muraki A."/>
            <person name="Nakayama S."/>
            <person name="Nakazaki N."/>
            <person name="Shinpo S."/>
            <person name="Takeuchi C."/>
            <person name="Wada T."/>
            <person name="Watanabe A."/>
            <person name="Yamada M."/>
            <person name="Yasuda M."/>
            <person name="Tabata S."/>
        </authorList>
    </citation>
    <scope>NUCLEOTIDE SEQUENCE [LARGE SCALE GENOMIC DNA]</scope>
    <source>
        <strain>cv. Columbia</strain>
    </source>
</reference>
<reference key="2">
    <citation type="journal article" date="2017" name="Plant J.">
        <title>Araport11: a complete reannotation of the Arabidopsis thaliana reference genome.</title>
        <authorList>
            <person name="Cheng C.Y."/>
            <person name="Krishnakumar V."/>
            <person name="Chan A.P."/>
            <person name="Thibaud-Nissen F."/>
            <person name="Schobel S."/>
            <person name="Town C.D."/>
        </authorList>
    </citation>
    <scope>GENOME REANNOTATION</scope>
    <source>
        <strain>cv. Columbia</strain>
    </source>
</reference>
<keyword id="KW-0007">Acetylation</keyword>
<keyword id="KW-0175">Coiled coil</keyword>
<keyword id="KW-0472">Membrane</keyword>
<keyword id="KW-0653">Protein transport</keyword>
<keyword id="KW-1185">Reference proteome</keyword>
<keyword id="KW-0812">Transmembrane</keyword>
<keyword id="KW-1133">Transmembrane helix</keyword>
<keyword id="KW-0813">Transport</keyword>
<accession>Q9SRV7</accession>
<sequence>MNDLLKGSLEFSRDRSNRSDIESGHGPGNSGDLGLSGFFKKVQEIEKQYEKLDKHLNKLQGAHEETKAVTKAPAMKSIKQRMERDVDEVGRISRFIKGKIEELDRENLENRTKPGCGKGTGVDRTRTATTIAVKKKFKDKISEFQTLRQNIQQEYREVVERRVFTVTGQRADEEAIDRLIETGDSEQIFQKAIREQGRGQIMDTLAEIQERHDAVRDLEKKLLDLQQVFLDMAVLVDAQGEMLDNIENMVSSAVDHVQSGNNQLTKAVKSQKSSRKWMCIAILILLIIIIITVISVLKPWTQKNGA</sequence>
<evidence type="ECO:0000250" key="1"/>
<evidence type="ECO:0000250" key="2">
    <source>
        <dbReference type="UniProtKB" id="Q9ZSD4"/>
    </source>
</evidence>
<evidence type="ECO:0000255" key="3"/>
<evidence type="ECO:0000255" key="4">
    <source>
        <dbReference type="PROSITE-ProRule" id="PRU00202"/>
    </source>
</evidence>
<evidence type="ECO:0000256" key="5">
    <source>
        <dbReference type="SAM" id="MobiDB-lite"/>
    </source>
</evidence>
<evidence type="ECO:0000305" key="6"/>